<keyword id="KW-0119">Carbohydrate metabolism</keyword>
<keyword id="KW-0903">Direct protein sequencing</keyword>
<keyword id="KW-0325">Glycoprotein</keyword>
<keyword id="KW-0333">Golgi apparatus</keyword>
<keyword id="KW-0472">Membrane</keyword>
<keyword id="KW-1185">Reference proteome</keyword>
<keyword id="KW-0735">Signal-anchor</keyword>
<keyword id="KW-0808">Transferase</keyword>
<keyword id="KW-0812">Transmembrane</keyword>
<keyword id="KW-1133">Transmembrane helix</keyword>
<feature type="chain" id="PRO_0000189666" description="Carbohydrate sulfotransferase 11">
    <location>
        <begin position="1"/>
        <end position="352"/>
    </location>
</feature>
<feature type="topological domain" description="Cytoplasmic" evidence="2">
    <location>
        <begin position="1"/>
        <end position="16"/>
    </location>
</feature>
<feature type="transmembrane region" description="Helical; Signal-anchor for type II membrane protein" evidence="2">
    <location>
        <begin position="17"/>
        <end position="37"/>
    </location>
</feature>
<feature type="topological domain" description="Lumenal" evidence="2">
    <location>
        <begin position="38"/>
        <end position="352"/>
    </location>
</feature>
<feature type="binding site" evidence="1">
    <location>
        <begin position="124"/>
        <end position="130"/>
    </location>
    <ligand>
        <name>3'-phosphoadenylyl sulfate</name>
        <dbReference type="ChEBI" id="CHEBI:58339"/>
    </ligand>
</feature>
<feature type="binding site" evidence="1">
    <location>
        <begin position="186"/>
        <end position="194"/>
    </location>
    <ligand>
        <name>3'-phosphoadenylyl sulfate</name>
        <dbReference type="ChEBI" id="CHEBI:58339"/>
    </ligand>
</feature>
<feature type="glycosylation site" description="N-linked (GlcNAc...) asparagine" evidence="2">
    <location>
        <position position="205"/>
    </location>
</feature>
<feature type="glycosylation site" description="N-linked (GlcNAc...) asparagine" evidence="2">
    <location>
        <position position="223"/>
    </location>
</feature>
<feature type="glycosylation site" description="N-linked (GlcNAc...) asparagine" evidence="2">
    <location>
        <position position="321"/>
    </location>
</feature>
<feature type="glycosylation site" description="N-linked (GlcNAc...) asparagine" evidence="1">
    <location>
        <position position="342"/>
    </location>
</feature>
<feature type="sequence conflict" description="In Ref. 2; AA sequence." evidence="3" ref="2">
    <original>G</original>
    <variation>Q</variation>
    <location>
        <position position="277"/>
    </location>
</feature>
<gene>
    <name type="primary">Chst11</name>
</gene>
<organism>
    <name type="scientific">Rattus norvegicus</name>
    <name type="common">Rat</name>
    <dbReference type="NCBI Taxonomy" id="10116"/>
    <lineage>
        <taxon>Eukaryota</taxon>
        <taxon>Metazoa</taxon>
        <taxon>Chordata</taxon>
        <taxon>Craniata</taxon>
        <taxon>Vertebrata</taxon>
        <taxon>Euteleostomi</taxon>
        <taxon>Mammalia</taxon>
        <taxon>Eutheria</taxon>
        <taxon>Euarchontoglires</taxon>
        <taxon>Glires</taxon>
        <taxon>Rodentia</taxon>
        <taxon>Myomorpha</taxon>
        <taxon>Muroidea</taxon>
        <taxon>Muridae</taxon>
        <taxon>Murinae</taxon>
        <taxon>Rattus</taxon>
    </lineage>
</organism>
<accession>P69478</accession>
<evidence type="ECO:0000250" key="1"/>
<evidence type="ECO:0000255" key="2"/>
<evidence type="ECO:0000305" key="3"/>
<comment type="function">
    <text evidence="1">Catalyzes the transfer of sulfate to position 4 of the N-acetylgalactosamine (GalNAc) residue of chondroitin. Chondroitin sulfate constitutes the predominant proteoglycan present in cartilage and is distributed on the surfaces of many cells and extracellular matrices. Can also sulfate Gal residues in desulfated dermatan sulfate. Preferentially sulfates in GlcA-&gt;GalNAc unit than in IdoA-&gt;GalNAc unit. Does not form 4, 6-di-O-sulfated GalNAc when chondroitin sulfate C is used as an acceptor (By similarity).</text>
</comment>
<comment type="catalytic activity">
    <reaction>
        <text>chondroitin beta-D-glucuronate + n 3'-phosphoadenylyl sulfate = chondroitin 4'-sulfate + n adenosine 3',5'-bisphosphate + n H(+)</text>
        <dbReference type="Rhea" id="RHEA:16101"/>
        <dbReference type="Rhea" id="RHEA-COMP:9827"/>
        <dbReference type="Rhea" id="RHEA-COMP:9829"/>
        <dbReference type="ChEBI" id="CHEBI:15378"/>
        <dbReference type="ChEBI" id="CHEBI:57652"/>
        <dbReference type="ChEBI" id="CHEBI:58339"/>
        <dbReference type="ChEBI" id="CHEBI:58343"/>
        <dbReference type="ChEBI" id="CHEBI:58422"/>
        <dbReference type="EC" id="2.8.2.5"/>
    </reaction>
</comment>
<comment type="subcellular location">
    <subcellularLocation>
        <location evidence="1">Golgi apparatus membrane</location>
        <topology evidence="1">Single-pass type II membrane protein</topology>
    </subcellularLocation>
</comment>
<comment type="PTM">
    <text evidence="1">N-glycosylated; required for activity and stability.</text>
</comment>
<comment type="similarity">
    <text evidence="3">Belongs to the sulfotransferase 2 family.</text>
</comment>
<proteinExistence type="evidence at protein level"/>
<name>CHSTB_RAT</name>
<dbReference type="EC" id="2.8.2.5"/>
<dbReference type="EMBL" id="AABR03057909">
    <property type="status" value="NOT_ANNOTATED_CDS"/>
    <property type="molecule type" value="Genomic_DNA"/>
</dbReference>
<dbReference type="EMBL" id="AABR03059893">
    <property type="status" value="NOT_ANNOTATED_CDS"/>
    <property type="molecule type" value="Genomic_DNA"/>
</dbReference>
<dbReference type="EMBL" id="AABR03062052">
    <property type="status" value="NOT_ANNOTATED_CDS"/>
    <property type="molecule type" value="Genomic_DNA"/>
</dbReference>
<dbReference type="EMBL" id="AABR03060128">
    <property type="status" value="NOT_ANNOTATED_CDS"/>
    <property type="molecule type" value="Genomic_DNA"/>
</dbReference>
<dbReference type="EMBL" id="AABR03059314">
    <property type="status" value="NOT_ANNOTATED_CDS"/>
    <property type="molecule type" value="Genomic_DNA"/>
</dbReference>
<dbReference type="EMBL" id="AABR03058261">
    <property type="status" value="NOT_ANNOTATED_CDS"/>
    <property type="molecule type" value="Genomic_DNA"/>
</dbReference>
<dbReference type="EMBL" id="AABR03058513">
    <property type="status" value="NOT_ANNOTATED_CDS"/>
    <property type="molecule type" value="Genomic_DNA"/>
</dbReference>
<dbReference type="EMBL" id="AABR03056595">
    <property type="status" value="NOT_ANNOTATED_CDS"/>
    <property type="molecule type" value="Genomic_DNA"/>
</dbReference>
<dbReference type="EMBL" id="AABR03057359">
    <property type="status" value="NOT_ANNOTATED_CDS"/>
    <property type="molecule type" value="Genomic_DNA"/>
</dbReference>
<dbReference type="EMBL" id="AABR03058222">
    <property type="status" value="NOT_ANNOTATED_CDS"/>
    <property type="molecule type" value="Genomic_DNA"/>
</dbReference>
<dbReference type="EMBL" id="AABR03059499">
    <property type="status" value="NOT_ANNOTATED_CDS"/>
    <property type="molecule type" value="Genomic_DNA"/>
</dbReference>
<dbReference type="EMBL" id="AABR03058053">
    <property type="status" value="NOT_ANNOTATED_CDS"/>
    <property type="molecule type" value="Genomic_DNA"/>
</dbReference>
<dbReference type="EMBL" id="AABR03058580">
    <property type="status" value="NOT_ANNOTATED_CDS"/>
    <property type="molecule type" value="Genomic_DNA"/>
</dbReference>
<dbReference type="EMBL" id="AABR03056571">
    <property type="status" value="NOT_ANNOTATED_CDS"/>
    <property type="molecule type" value="Genomic_DNA"/>
</dbReference>
<dbReference type="EMBL" id="AABR03061700">
    <property type="status" value="NOT_ANNOTATED_CDS"/>
    <property type="molecule type" value="Genomic_DNA"/>
</dbReference>
<dbReference type="EMBL" id="AABR03056958">
    <property type="status" value="NOT_ANNOTATED_CDS"/>
    <property type="molecule type" value="Genomic_DNA"/>
</dbReference>
<dbReference type="RefSeq" id="NP_001101549.1">
    <property type="nucleotide sequence ID" value="NM_001108079.1"/>
</dbReference>
<dbReference type="RefSeq" id="XP_017450314.1">
    <property type="nucleotide sequence ID" value="XM_017594825.1"/>
</dbReference>
<dbReference type="FunCoup" id="P69478">
    <property type="interactions" value="216"/>
</dbReference>
<dbReference type="STRING" id="10116.ENSRNOP00000012017"/>
<dbReference type="GlyCosmos" id="P69478">
    <property type="glycosylation" value="4 sites, No reported glycans"/>
</dbReference>
<dbReference type="GlyGen" id="P69478">
    <property type="glycosylation" value="4 sites"/>
</dbReference>
<dbReference type="PhosphoSitePlus" id="P69478"/>
<dbReference type="PaxDb" id="10116-ENSRNOP00000012017"/>
<dbReference type="GeneID" id="314694"/>
<dbReference type="KEGG" id="rno:314694"/>
<dbReference type="UCSC" id="RGD:1308400">
    <property type="organism name" value="rat"/>
</dbReference>
<dbReference type="AGR" id="RGD:1308400"/>
<dbReference type="CTD" id="50515"/>
<dbReference type="RGD" id="1308400">
    <property type="gene designation" value="Chst11"/>
</dbReference>
<dbReference type="VEuPathDB" id="HostDB:ENSRNOG00000008885"/>
<dbReference type="eggNOG" id="KOG4651">
    <property type="taxonomic scope" value="Eukaryota"/>
</dbReference>
<dbReference type="HOGENOM" id="CLU_043398_1_1_1"/>
<dbReference type="InParanoid" id="P69478"/>
<dbReference type="OrthoDB" id="2019940at2759"/>
<dbReference type="PhylomeDB" id="P69478"/>
<dbReference type="TreeFam" id="TF325581"/>
<dbReference type="BRENDA" id="2.8.2.5">
    <property type="organism ID" value="5301"/>
</dbReference>
<dbReference type="Reactome" id="R-RNO-2022870">
    <property type="pathway name" value="Chondroitin sulfate biosynthesis"/>
</dbReference>
<dbReference type="SABIO-RK" id="P69478"/>
<dbReference type="PRO" id="PR:P69478"/>
<dbReference type="Proteomes" id="UP000002494">
    <property type="component" value="Chromosome 7"/>
</dbReference>
<dbReference type="Bgee" id="ENSRNOG00000008885">
    <property type="expression patterns" value="Expressed in ovary and 18 other cell types or tissues"/>
</dbReference>
<dbReference type="ExpressionAtlas" id="P69478">
    <property type="expression patterns" value="baseline and differential"/>
</dbReference>
<dbReference type="GO" id="GO:0000139">
    <property type="term" value="C:Golgi membrane"/>
    <property type="evidence" value="ECO:0007669"/>
    <property type="project" value="UniProtKB-SubCell"/>
</dbReference>
<dbReference type="GO" id="GO:0047756">
    <property type="term" value="F:chondroitin 4-sulfotransferase activity"/>
    <property type="evidence" value="ECO:0000266"/>
    <property type="project" value="RGD"/>
</dbReference>
<dbReference type="GO" id="GO:0001537">
    <property type="term" value="F:dermatan 4-sulfotransferase activity"/>
    <property type="evidence" value="ECO:0000266"/>
    <property type="project" value="RGD"/>
</dbReference>
<dbReference type="GO" id="GO:0050659">
    <property type="term" value="F:N-acetylgalactosamine 4-sulfate 6-O-sulfotransferase activity"/>
    <property type="evidence" value="ECO:0000266"/>
    <property type="project" value="RGD"/>
</dbReference>
<dbReference type="GO" id="GO:0008146">
    <property type="term" value="F:sulfotransferase activity"/>
    <property type="evidence" value="ECO:0000266"/>
    <property type="project" value="RGD"/>
</dbReference>
<dbReference type="GO" id="GO:0006915">
    <property type="term" value="P:apoptotic process"/>
    <property type="evidence" value="ECO:0000266"/>
    <property type="project" value="RGD"/>
</dbReference>
<dbReference type="GO" id="GO:0016051">
    <property type="term" value="P:carbohydrate biosynthetic process"/>
    <property type="evidence" value="ECO:0007669"/>
    <property type="project" value="InterPro"/>
</dbReference>
<dbReference type="GO" id="GO:0051216">
    <property type="term" value="P:cartilage development"/>
    <property type="evidence" value="ECO:0000266"/>
    <property type="project" value="RGD"/>
</dbReference>
<dbReference type="GO" id="GO:0002063">
    <property type="term" value="P:chondrocyte development"/>
    <property type="evidence" value="ECO:0000266"/>
    <property type="project" value="RGD"/>
</dbReference>
<dbReference type="GO" id="GO:0048589">
    <property type="term" value="P:developmental growth"/>
    <property type="evidence" value="ECO:0000266"/>
    <property type="project" value="RGD"/>
</dbReference>
<dbReference type="GO" id="GO:0042733">
    <property type="term" value="P:embryonic digit morphogenesis"/>
    <property type="evidence" value="ECO:0000266"/>
    <property type="project" value="RGD"/>
</dbReference>
<dbReference type="GO" id="GO:0030326">
    <property type="term" value="P:embryonic limb morphogenesis"/>
    <property type="evidence" value="ECO:0000266"/>
    <property type="project" value="RGD"/>
</dbReference>
<dbReference type="GO" id="GO:0048704">
    <property type="term" value="P:embryonic skeletal system morphogenesis"/>
    <property type="evidence" value="ECO:0000266"/>
    <property type="project" value="RGD"/>
</dbReference>
<dbReference type="GO" id="GO:0048703">
    <property type="term" value="P:embryonic viscerocranium morphogenesis"/>
    <property type="evidence" value="ECO:0000266"/>
    <property type="project" value="RGD"/>
</dbReference>
<dbReference type="GO" id="GO:0001701">
    <property type="term" value="P:in utero embryonic development"/>
    <property type="evidence" value="ECO:0000266"/>
    <property type="project" value="RGD"/>
</dbReference>
<dbReference type="GO" id="GO:0043066">
    <property type="term" value="P:negative regulation of apoptotic process"/>
    <property type="evidence" value="ECO:0000266"/>
    <property type="project" value="RGD"/>
</dbReference>
<dbReference type="GO" id="GO:0030512">
    <property type="term" value="P:negative regulation of transforming growth factor beta receptor signaling pathway"/>
    <property type="evidence" value="ECO:0000266"/>
    <property type="project" value="RGD"/>
</dbReference>
<dbReference type="GO" id="GO:0033037">
    <property type="term" value="P:polysaccharide localization"/>
    <property type="evidence" value="ECO:0000266"/>
    <property type="project" value="RGD"/>
</dbReference>
<dbReference type="GO" id="GO:0036342">
    <property type="term" value="P:post-anal tail morphogenesis"/>
    <property type="evidence" value="ECO:0000266"/>
    <property type="project" value="RGD"/>
</dbReference>
<dbReference type="GO" id="GO:0009791">
    <property type="term" value="P:post-embryonic development"/>
    <property type="evidence" value="ECO:0000266"/>
    <property type="project" value="RGD"/>
</dbReference>
<dbReference type="GO" id="GO:0030166">
    <property type="term" value="P:proteoglycan biosynthetic process"/>
    <property type="evidence" value="ECO:0000318"/>
    <property type="project" value="GO_Central"/>
</dbReference>
<dbReference type="GO" id="GO:0042127">
    <property type="term" value="P:regulation of cell population proliferation"/>
    <property type="evidence" value="ECO:0000266"/>
    <property type="project" value="RGD"/>
</dbReference>
<dbReference type="GO" id="GO:0007585">
    <property type="term" value="P:respiratory gaseous exchange by respiratory system"/>
    <property type="evidence" value="ECO:0000266"/>
    <property type="project" value="RGD"/>
</dbReference>
<dbReference type="GO" id="GO:0007179">
    <property type="term" value="P:transforming growth factor beta receptor signaling pathway"/>
    <property type="evidence" value="ECO:0000266"/>
    <property type="project" value="RGD"/>
</dbReference>
<dbReference type="InterPro" id="IPR018011">
    <property type="entry name" value="Carb_sulfotrans_8-10"/>
</dbReference>
<dbReference type="InterPro" id="IPR005331">
    <property type="entry name" value="Sulfotransferase"/>
</dbReference>
<dbReference type="PANTHER" id="PTHR12137">
    <property type="entry name" value="CARBOHYDRATE SULFOTRANSFERASE"/>
    <property type="match status" value="1"/>
</dbReference>
<dbReference type="PANTHER" id="PTHR12137:SF32">
    <property type="entry name" value="CARBOHYDRATE SULFOTRANSFERASE 11"/>
    <property type="match status" value="1"/>
</dbReference>
<dbReference type="Pfam" id="PF03567">
    <property type="entry name" value="Sulfotransfer_2"/>
    <property type="match status" value="1"/>
</dbReference>
<sequence>MKPALLEVMRMNRICRMVLATCLGSFILVIFYFQSMLHPVMRRNPFGVDICCRKGSRSPLQELYNPIQLELSNTAILHQMRRDQVTDTCRANSAMSRKRRVLTPNDLKHLVVDEDHELIYCYVPKVACTNWKRLMMVLSGRGKYSDPMEIPANEAHVSANLKTLNQYSIPEINHRLKSYMKFLFVREPFERLVSAYRNKFTQKYNTSFHKRYGTKIIRRQRKNATQEALRKGDDVKFEEFVAYLIDPHTQREEPFNEHWQTVYSLCHPCHIHYDLVGKYETLEEDSNYVLRLAGVSGYLKFPTYAKSTRTTDEMTTEFFQNISAEHQTQLYEVYKLDFLMFNYSVPNYLKLD</sequence>
<reference key="1">
    <citation type="journal article" date="2004" name="Nature">
        <title>Genome sequence of the Brown Norway rat yields insights into mammalian evolution.</title>
        <authorList>
            <person name="Gibbs R.A."/>
            <person name="Weinstock G.M."/>
            <person name="Metzker M.L."/>
            <person name="Muzny D.M."/>
            <person name="Sodergren E.J."/>
            <person name="Scherer S."/>
            <person name="Scott G."/>
            <person name="Steffen D."/>
            <person name="Worley K.C."/>
            <person name="Burch P.E."/>
            <person name="Okwuonu G."/>
            <person name="Hines S."/>
            <person name="Lewis L."/>
            <person name="Deramo C."/>
            <person name="Delgado O."/>
            <person name="Dugan-Rocha S."/>
            <person name="Miner G."/>
            <person name="Morgan M."/>
            <person name="Hawes A."/>
            <person name="Gill R."/>
            <person name="Holt R.A."/>
            <person name="Adams M.D."/>
            <person name="Amanatides P.G."/>
            <person name="Baden-Tillson H."/>
            <person name="Barnstead M."/>
            <person name="Chin S."/>
            <person name="Evans C.A."/>
            <person name="Ferriera S."/>
            <person name="Fosler C."/>
            <person name="Glodek A."/>
            <person name="Gu Z."/>
            <person name="Jennings D."/>
            <person name="Kraft C.L."/>
            <person name="Nguyen T."/>
            <person name="Pfannkoch C.M."/>
            <person name="Sitter C."/>
            <person name="Sutton G.G."/>
            <person name="Venter J.C."/>
            <person name="Woodage T."/>
            <person name="Smith D."/>
            <person name="Lee H.-M."/>
            <person name="Gustafson E."/>
            <person name="Cahill P."/>
            <person name="Kana A."/>
            <person name="Doucette-Stamm L."/>
            <person name="Weinstock K."/>
            <person name="Fechtel K."/>
            <person name="Weiss R.B."/>
            <person name="Dunn D.M."/>
            <person name="Green E.D."/>
            <person name="Blakesley R.W."/>
            <person name="Bouffard G.G."/>
            <person name="De Jong P.J."/>
            <person name="Osoegawa K."/>
            <person name="Zhu B."/>
            <person name="Marra M."/>
            <person name="Schein J."/>
            <person name="Bosdet I."/>
            <person name="Fjell C."/>
            <person name="Jones S."/>
            <person name="Krzywinski M."/>
            <person name="Mathewson C."/>
            <person name="Siddiqui A."/>
            <person name="Wye N."/>
            <person name="McPherson J."/>
            <person name="Zhao S."/>
            <person name="Fraser C.M."/>
            <person name="Shetty J."/>
            <person name="Shatsman S."/>
            <person name="Geer K."/>
            <person name="Chen Y."/>
            <person name="Abramzon S."/>
            <person name="Nierman W.C."/>
            <person name="Havlak P.H."/>
            <person name="Chen R."/>
            <person name="Durbin K.J."/>
            <person name="Egan A."/>
            <person name="Ren Y."/>
            <person name="Song X.-Z."/>
            <person name="Li B."/>
            <person name="Liu Y."/>
            <person name="Qin X."/>
            <person name="Cawley S."/>
            <person name="Cooney A.J."/>
            <person name="D'Souza L.M."/>
            <person name="Martin K."/>
            <person name="Wu J.Q."/>
            <person name="Gonzalez-Garay M.L."/>
            <person name="Jackson A.R."/>
            <person name="Kalafus K.J."/>
            <person name="McLeod M.P."/>
            <person name="Milosavljevic A."/>
            <person name="Virk D."/>
            <person name="Volkov A."/>
            <person name="Wheeler D.A."/>
            <person name="Zhang Z."/>
            <person name="Bailey J.A."/>
            <person name="Eichler E.E."/>
            <person name="Tuzun E."/>
            <person name="Birney E."/>
            <person name="Mongin E."/>
            <person name="Ureta-Vidal A."/>
            <person name="Woodwark C."/>
            <person name="Zdobnov E."/>
            <person name="Bork P."/>
            <person name="Suyama M."/>
            <person name="Torrents D."/>
            <person name="Alexandersson M."/>
            <person name="Trask B.J."/>
            <person name="Young J.M."/>
            <person name="Huang H."/>
            <person name="Wang H."/>
            <person name="Xing H."/>
            <person name="Daniels S."/>
            <person name="Gietzen D."/>
            <person name="Schmidt J."/>
            <person name="Stevens K."/>
            <person name="Vitt U."/>
            <person name="Wingrove J."/>
            <person name="Camara F."/>
            <person name="Mar Alba M."/>
            <person name="Abril J.F."/>
            <person name="Guigo R."/>
            <person name="Smit A."/>
            <person name="Dubchak I."/>
            <person name="Rubin E.M."/>
            <person name="Couronne O."/>
            <person name="Poliakov A."/>
            <person name="Huebner N."/>
            <person name="Ganten D."/>
            <person name="Goesele C."/>
            <person name="Hummel O."/>
            <person name="Kreitler T."/>
            <person name="Lee Y.-A."/>
            <person name="Monti J."/>
            <person name="Schulz H."/>
            <person name="Zimdahl H."/>
            <person name="Himmelbauer H."/>
            <person name="Lehrach H."/>
            <person name="Jacob H.J."/>
            <person name="Bromberg S."/>
            <person name="Gullings-Handley J."/>
            <person name="Jensen-Seaman M.I."/>
            <person name="Kwitek A.E."/>
            <person name="Lazar J."/>
            <person name="Pasko D."/>
            <person name="Tonellato P.J."/>
            <person name="Twigger S."/>
            <person name="Ponting C.P."/>
            <person name="Duarte J.M."/>
            <person name="Rice S."/>
            <person name="Goodstadt L."/>
            <person name="Beatson S.A."/>
            <person name="Emes R.D."/>
            <person name="Winter E.E."/>
            <person name="Webber C."/>
            <person name="Brandt P."/>
            <person name="Nyakatura G."/>
            <person name="Adetobi M."/>
            <person name="Chiaromonte F."/>
            <person name="Elnitski L."/>
            <person name="Eswara P."/>
            <person name="Hardison R.C."/>
            <person name="Hou M."/>
            <person name="Kolbe D."/>
            <person name="Makova K."/>
            <person name="Miller W."/>
            <person name="Nekrutenko A."/>
            <person name="Riemer C."/>
            <person name="Schwartz S."/>
            <person name="Taylor J."/>
            <person name="Yang S."/>
            <person name="Zhang Y."/>
            <person name="Lindpaintner K."/>
            <person name="Andrews T.D."/>
            <person name="Caccamo M."/>
            <person name="Clamp M."/>
            <person name="Clarke L."/>
            <person name="Curwen V."/>
            <person name="Durbin R.M."/>
            <person name="Eyras E."/>
            <person name="Searle S.M."/>
            <person name="Cooper G.M."/>
            <person name="Batzoglou S."/>
            <person name="Brudno M."/>
            <person name="Sidow A."/>
            <person name="Stone E.A."/>
            <person name="Payseur B.A."/>
            <person name="Bourque G."/>
            <person name="Lopez-Otin C."/>
            <person name="Puente X.S."/>
            <person name="Chakrabarti K."/>
            <person name="Chatterji S."/>
            <person name="Dewey C."/>
            <person name="Pachter L."/>
            <person name="Bray N."/>
            <person name="Yap V.B."/>
            <person name="Caspi A."/>
            <person name="Tesler G."/>
            <person name="Pevzner P.A."/>
            <person name="Haussler D."/>
            <person name="Roskin K.M."/>
            <person name="Baertsch R."/>
            <person name="Clawson H."/>
            <person name="Furey T.S."/>
            <person name="Hinrichs A.S."/>
            <person name="Karolchik D."/>
            <person name="Kent W.J."/>
            <person name="Rosenbloom K.R."/>
            <person name="Trumbower H."/>
            <person name="Weirauch M."/>
            <person name="Cooper D.N."/>
            <person name="Stenson P.D."/>
            <person name="Ma B."/>
            <person name="Brent M."/>
            <person name="Arumugam M."/>
            <person name="Shteynberg D."/>
            <person name="Copley R.R."/>
            <person name="Taylor M.S."/>
            <person name="Riethman H."/>
            <person name="Mudunuri U."/>
            <person name="Peterson J."/>
            <person name="Guyer M."/>
            <person name="Felsenfeld A."/>
            <person name="Old S."/>
            <person name="Mockrin S."/>
            <person name="Collins F.S."/>
        </authorList>
    </citation>
    <scope>NUCLEOTIDE SEQUENCE [LARGE SCALE GENOMIC DNA]</scope>
    <source>
        <strain>Brown Norway</strain>
    </source>
</reference>
<reference key="2">
    <citation type="journal article" date="2000" name="J. Biol. Chem.">
        <title>Molecular cloning and expression of chondroitin 4-sulfotransferase.</title>
        <authorList>
            <person name="Yamauchi S."/>
            <person name="Mita S."/>
            <person name="Matsubara T."/>
            <person name="Fukuta M."/>
            <person name="Habuchi H."/>
            <person name="Kimata K."/>
            <person name="Habuchi O."/>
        </authorList>
    </citation>
    <scope>PROTEIN SEQUENCE OF 59-66; 163-171; 187-197; 274-278 AND 285-300</scope>
</reference>
<protein>
    <recommendedName>
        <fullName>Carbohydrate sulfotransferase 11</fullName>
        <ecNumber>2.8.2.5</ecNumber>
    </recommendedName>
    <alternativeName>
        <fullName>Chondroitin 4-O-sulfotransferase 1</fullName>
    </alternativeName>
    <alternativeName>
        <fullName>Chondroitin 4-sulfotransferase 1</fullName>
        <shortName>C4S-1</shortName>
        <shortName>C4ST-1</shortName>
        <shortName>C4ST1</shortName>
    </alternativeName>
</protein>